<name>GRA7_TOXGO</name>
<protein>
    <recommendedName>
        <fullName evidence="12 14">Dense granule protein 7</fullName>
        <shortName>Protein GRA 7</shortName>
    </recommendedName>
    <alternativeName>
        <fullName>29 kDa excretory dense granule protein</fullName>
    </alternativeName>
    <alternativeName>
        <fullName evidence="13 15 16">Dense granule antigen 7</fullName>
    </alternativeName>
    <alternativeName>
        <fullName evidence="11">Dense granule protein GRA7</fullName>
    </alternativeName>
    <alternativeName>
        <fullName evidence="11 15 16">p29</fullName>
    </alternativeName>
</protein>
<reference key="1">
    <citation type="journal article" date="1998" name="Mol. Biochem. Parasitol.">
        <title>GRA7, an excretory 29 kDa Toxoplasma gondii dense granule antigen released by infected host cells.</title>
        <authorList>
            <person name="Fischer H.-G."/>
            <person name="Stachelhaus S."/>
            <person name="Sahm M."/>
            <person name="Meyer H.E."/>
            <person name="Reichmann G."/>
        </authorList>
    </citation>
    <scope>NUCLEOTIDE SEQUENCE [GENOMIC DNA]</scope>
    <scope>PARTIAL PROTEIN SEQUENCE</scope>
    <scope>SUBCELLULAR LOCATION</scope>
    <scope>DEVELOPMENTAL STAGE</scope>
    <source>
        <strain>BK</strain>
    </source>
</reference>
<reference key="2">
    <citation type="journal article" date="1998" name="Mol. Biochem. Parasitol.">
        <title>Identification and heterologous expression of a new dense granule protein (GRA7) from Toxoplasma gondii.</title>
        <authorList>
            <person name="Jacobs D."/>
            <person name="Dubremetz J.-F."/>
            <person name="Loyens A."/>
            <person name="Bosman F."/>
            <person name="Saman E."/>
        </authorList>
    </citation>
    <scope>NUCLEOTIDE SEQUENCE [MRNA]</scope>
    <scope>SUBCELLULAR LOCATION</scope>
    <source>
        <strain>Wiktor</strain>
    </source>
</reference>
<reference key="3">
    <citation type="journal article" date="1998" name="J. Histochem. Cytochem.">
        <title>Quantitative immunolocalization of a P29 protein (GRA7), a new antigen of toxoplasma gondii.</title>
        <authorList>
            <person name="Bonhomme A."/>
            <person name="Maine G.T."/>
            <person name="Beorchia A."/>
            <person name="Burlet H."/>
            <person name="Aubert D."/>
            <person name="Villena I."/>
            <person name="Hunt J."/>
            <person name="Chovan L."/>
            <person name="Howard L."/>
            <person name="Brojanac S."/>
            <person name="Sheu M."/>
            <person name="Tyner J."/>
            <person name="Pluot M."/>
            <person name="Pinon J.M."/>
        </authorList>
    </citation>
    <scope>SUBCELLULAR LOCATION</scope>
</reference>
<reference key="4">
    <citation type="journal article" date="2006" name="Cell">
        <title>Toxoplasma gondii sequesters lysosomes from mammalian hosts in the vacuolar space.</title>
        <authorList>
            <person name="Coppens I."/>
            <person name="Dunn J.D."/>
            <person name="Romano J.D."/>
            <person name="Pypaert M."/>
            <person name="Zhang H."/>
            <person name="Boothroyd J.C."/>
            <person name="Joiner K.A."/>
        </authorList>
    </citation>
    <scope>IDENTIFICATION BY MASS SPECTROMETRY</scope>
    <scope>FUNCTION</scope>
    <scope>SUBUNIT</scope>
    <scope>SUBCELLULAR LOCATION</scope>
    <scope>DISRUPTION PHENOTYPE</scope>
    <scope>REGION INVOLVED IN INTERATIONS WITH LIPIDS</scope>
</reference>
<reference key="5">
    <citation type="journal article" date="2013" name="Parasitol. Res.">
        <title>Expression of Toxoplasma gondii dense granule protein7 (GRA7) in Eimeria tenella.</title>
        <authorList>
            <person name="Yin G."/>
            <person name="Qin M."/>
            <person name="Liu X."/>
            <person name="Suo J."/>
            <person name="Suo X."/>
        </authorList>
    </citation>
    <scope>SUBCELLULAR LOCATION</scope>
</reference>
<reference key="6">
    <citation type="journal article" date="2014" name="Proc. Natl. Acad. Sci. U.S.A.">
        <title>Toxoplasma GRA7 effector increases turnover of immunity-related GTPases and contributes to acute virulence in the mouse.</title>
        <authorList>
            <person name="Alaganan A."/>
            <person name="Fentress S.J."/>
            <person name="Tang K."/>
            <person name="Wang Q."/>
            <person name="Sibley L.D."/>
        </authorList>
    </citation>
    <scope>IDENTIFICATION BY MASS SPECTROMETRY</scope>
    <scope>FUNCTION</scope>
    <scope>SUBUNIT</scope>
    <scope>SUBCELLULAR LOCATION</scope>
    <scope>DISRUPTION PHENOTYPE</scope>
</reference>
<reference key="7">
    <citation type="journal article" date="2016" name="Cell. Microbiol.">
        <title>The Toxoplasma gondii rhoptry protein ROP18 is an Irga6-specific kinase and regulated by the dense granule protein GRA7.</title>
        <authorList>
            <person name="Hermanns T."/>
            <person name="Mueller U.B."/>
            <person name="Koenen-Waisman S."/>
            <person name="Howard J.C."/>
            <person name="Steinfeldt T."/>
        </authorList>
    </citation>
    <scope>IDENTIFICATION BY MASS SPECTROMETRY</scope>
    <scope>FUNCTION</scope>
    <scope>INTERACTION WITH ROP5 AND ROP18</scope>
    <scope>DISRUPTION PHENOTYPE</scope>
</reference>
<reference key="8">
    <citation type="journal article" date="2016" name="Infect. Immun.">
        <title>Toxoplasma gondii GRA7-Induced TRAF6 Activation Contributes to Host Protective Immunity.</title>
        <authorList>
            <person name="Yang C.S."/>
            <person name="Yuk J.M."/>
            <person name="Lee Y.H."/>
            <person name="Jo E.K."/>
        </authorList>
    </citation>
    <scope>FUNCTION</scope>
    <scope>INTERACTION WITH MOUSE TRAF6</scope>
</reference>
<organism>
    <name type="scientific">Toxoplasma gondii</name>
    <dbReference type="NCBI Taxonomy" id="5811"/>
    <lineage>
        <taxon>Eukaryota</taxon>
        <taxon>Sar</taxon>
        <taxon>Alveolata</taxon>
        <taxon>Apicomplexa</taxon>
        <taxon>Conoidasida</taxon>
        <taxon>Coccidia</taxon>
        <taxon>Eucoccidiorida</taxon>
        <taxon>Eimeriorina</taxon>
        <taxon>Sarcocystidae</taxon>
        <taxon>Toxoplasma</taxon>
    </lineage>
</organism>
<evidence type="ECO:0000255" key="1"/>
<evidence type="ECO:0000256" key="2">
    <source>
        <dbReference type="SAM" id="MobiDB-lite"/>
    </source>
</evidence>
<evidence type="ECO:0000269" key="3">
    <source>
    </source>
</evidence>
<evidence type="ECO:0000269" key="4">
    <source>
    </source>
</evidence>
<evidence type="ECO:0000269" key="5">
    <source>
    </source>
</evidence>
<evidence type="ECO:0000269" key="6">
    <source>
    </source>
</evidence>
<evidence type="ECO:0000269" key="7">
    <source>
    </source>
</evidence>
<evidence type="ECO:0000269" key="8">
    <source>
    </source>
</evidence>
<evidence type="ECO:0000269" key="9">
    <source>
    </source>
</evidence>
<evidence type="ECO:0000269" key="10">
    <source>
    </source>
</evidence>
<evidence type="ECO:0000303" key="11">
    <source>
    </source>
</evidence>
<evidence type="ECO:0000303" key="12">
    <source>
    </source>
</evidence>
<evidence type="ECO:0000303" key="13">
    <source>
    </source>
</evidence>
<evidence type="ECO:0000303" key="14">
    <source>
    </source>
</evidence>
<evidence type="ECO:0000303" key="15">
    <source>
    </source>
</evidence>
<evidence type="ECO:0000303" key="16">
    <source>
    </source>
</evidence>
<evidence type="ECO:0000305" key="17"/>
<proteinExistence type="evidence at protein level"/>
<accession>O00933</accession>
<gene>
    <name evidence="12 13 15 16" type="primary">GRA7</name>
</gene>
<dbReference type="EMBL" id="Y13863">
    <property type="protein sequence ID" value="CAA74178.1"/>
    <property type="molecule type" value="Genomic_DNA"/>
</dbReference>
<dbReference type="EMBL" id="U79158">
    <property type="protein sequence ID" value="AAC48314.1"/>
    <property type="molecule type" value="mRNA"/>
</dbReference>
<dbReference type="GlyCosmos" id="O00933">
    <property type="glycosylation" value="1 site, No reported glycans"/>
</dbReference>
<dbReference type="VEuPathDB" id="ToxoDB:TGARI_203310"/>
<dbReference type="VEuPathDB" id="ToxoDB:TGCAST_203310"/>
<dbReference type="VEuPathDB" id="ToxoDB:TGCOUG_203310"/>
<dbReference type="VEuPathDB" id="ToxoDB:TGDOM2_203310"/>
<dbReference type="VEuPathDB" id="ToxoDB:TGFOU_203310"/>
<dbReference type="VEuPathDB" id="ToxoDB:TGGT1_203310"/>
<dbReference type="VEuPathDB" id="ToxoDB:TGMAS_203310"/>
<dbReference type="VEuPathDB" id="ToxoDB:TGME49_203310"/>
<dbReference type="VEuPathDB" id="ToxoDB:TGP89_203310"/>
<dbReference type="VEuPathDB" id="ToxoDB:TGPRC2_203310"/>
<dbReference type="VEuPathDB" id="ToxoDB:TGRH88_035710"/>
<dbReference type="VEuPathDB" id="ToxoDB:TGRUB_203310"/>
<dbReference type="VEuPathDB" id="ToxoDB:TGVAND_203310"/>
<dbReference type="VEuPathDB" id="ToxoDB:TGVEG_203310"/>
<dbReference type="PHI-base" id="PHI:4049"/>
<dbReference type="GO" id="GO:0016020">
    <property type="term" value="C:membrane"/>
    <property type="evidence" value="ECO:0007669"/>
    <property type="project" value="UniProtKB-KW"/>
</dbReference>
<dbReference type="GO" id="GO:0020005">
    <property type="term" value="C:symbiont-containing vacuole membrane"/>
    <property type="evidence" value="ECO:0007669"/>
    <property type="project" value="UniProtKB-SubCell"/>
</dbReference>
<dbReference type="GO" id="GO:0030133">
    <property type="term" value="C:transport vesicle"/>
    <property type="evidence" value="ECO:0007669"/>
    <property type="project" value="UniProtKB-SubCell"/>
</dbReference>
<dbReference type="GO" id="GO:0141213">
    <property type="term" value="P:symbiont-mediated generation of symbiont replication vacuole"/>
    <property type="evidence" value="ECO:0000269"/>
    <property type="project" value="SigSci"/>
</dbReference>
<dbReference type="InterPro" id="IPR008120">
    <property type="entry name" value="Dense_granule_Gra7_protein"/>
</dbReference>
<dbReference type="PRINTS" id="PR01747">
    <property type="entry name" value="DENSEGRNULE7"/>
</dbReference>
<feature type="signal peptide" evidence="1">
    <location>
        <begin position="1"/>
        <end position="26"/>
    </location>
</feature>
<feature type="chain" id="PRO_0000021371" description="Dense granule protein 7">
    <location>
        <begin position="27"/>
        <end position="236"/>
    </location>
</feature>
<feature type="transmembrane region" description="Helical" evidence="1">
    <location>
        <begin position="181"/>
        <end position="201"/>
    </location>
</feature>
<feature type="region of interest" description="Disordered" evidence="2">
    <location>
        <begin position="45"/>
        <end position="106"/>
    </location>
</feature>
<feature type="region of interest" description="Required for dimerization, interactions with liposomes and liposome tubulation" evidence="3">
    <location>
        <begin position="147"/>
        <end position="236"/>
    </location>
</feature>
<feature type="region of interest" description="Disordered" evidence="2">
    <location>
        <begin position="208"/>
        <end position="236"/>
    </location>
</feature>
<feature type="compositionally biased region" description="Polar residues" evidence="2">
    <location>
        <begin position="70"/>
        <end position="80"/>
    </location>
</feature>
<feature type="compositionally biased region" description="Acidic residues" evidence="2">
    <location>
        <begin position="223"/>
        <end position="236"/>
    </location>
</feature>
<feature type="glycosylation site" description="N-linked (GlcNAc...) asparagine" evidence="1">
    <location>
        <position position="213"/>
    </location>
</feature>
<comment type="function">
    <text evidence="3 5 6 7">Binds lipid bilayers, sequesters host endocytic organelles in the parasitophorous vacuole space, and causes their deformation and remodeling (PubMed:16630815). Plays a role in nutrient acquisition from the host (PubMed:16630815). In complex with ROP18, targets immunity-related GTPases (IRGs) to prevent IRG-mediated parasite killing by mouse cells (PubMed:24390541). Important component within a kinase complex, contributing to phosphorylation of mouse IRGA6/IIGP1, an immunity-related GTPase that protects mice from infection by certain intracellular pathogens, by Toxoplasma gondii ROP5 and ROP18 (PubMed:26247512). Induces pro-inflammatory cytokine production in host macrophages (PubMed:26553469). Activates host pro-inflammatory signaling pathways in a MyD88-dependent manner (PubMed:26553469). Triggers generation of reactive oxygen species (ROS) in host cells (PubMed:26553469). Activates MAPK pathway in host cells (PubMed:26553469). Activates host NF-kappa-B signaling pathway by interacting with TRAF6 and modulating the 'Lys-63'-linked polyubiquitination of TRAF6 (PubMed:26553469).</text>
</comment>
<comment type="subunit">
    <text evidence="3 5 6 7">Homodimer (PubMed:16630815). Can form higher order homooligomers in a lipid-stimulated manner (PubMed:16630815). Component of a complex at least composed of ROP18, GRA7 and ROP2 (PubMed:24390541). Interacts with ROP5 (PubMed:24390541, PubMed:26247512). Interacts with ROP18 in the absence of ROP5 (PubMed:26247512). Interacts with mouse IRGA6/IIGP1 in GTP-dependent manner; the interaction results in faster turnover of the GTP-activated IRGA6/IIGP1 oligomer (PubMed:24390541). Interacts with mouse TRAF6 (via N-terminal RING domain); the interaction plays a role in GRA7-induced pro-inflammatory cytokine production in mouse macrophages (PubMed:26553469).</text>
</comment>
<comment type="subcellular location">
    <subcellularLocation>
        <location evidence="9">Secreted</location>
    </subcellularLocation>
    <subcellularLocation>
        <location evidence="3 4 9 10">Parasitophorous vacuole lumen</location>
    </subcellularLocation>
    <subcellularLocation>
        <location evidence="5 8 9 10">Parasitophorous vacuole membrane</location>
        <topology evidence="1">Single-pass membrane protein</topology>
    </subcellularLocation>
    <subcellularLocation>
        <location evidence="9">Cytoplasm</location>
    </subcellularLocation>
    <subcellularLocation>
        <location evidence="9">Host cytoplasm</location>
    </subcellularLocation>
    <subcellularLocation>
        <location>Cytoplasmic vesicle</location>
        <location>Secretory vesicle</location>
    </subcellularLocation>
    <text evidence="5 8 9 10">Located in dense granules of tachyzoites (PubMed:24390541, PubMed:9566517, PubMed:9815283). Upon infection, secreted into the parasitophorous vacuole (PubMed:9566517, PubMed:9815283). In bradyzoite-infected cells, localizes within the host cell cytoplasm (PubMed:9566518).</text>
</comment>
<comment type="developmental stage">
    <text evidence="9">Expressed in tachyzoites and bradyzoites (at protein level).</text>
</comment>
<comment type="disruption phenotype">
    <text evidence="3 5 6">Gene knockout has no significant effects on parasite growth rates in cell culture (PubMed:24390541). Reduced parasite growth in nutrient-depleted media with increased vacuolization and loss of organelles (PubMed:16630815). Increased frequency of parasitophorous vacuoles loaded with mouse immunity-related GTPases (IRGs) (PubMed:26247512). Reduced levels of mouse IRGA6/IIGP1 phosphorylation following Toxoplasma gondii infection (PubMed:26247512). Reduced virulence in mice (PubMed:24390541, PubMed:26247512). Significantly reduced virulence in mice in double knockout with ROP18 (PubMed:24390541).</text>
</comment>
<comment type="miscellaneous">
    <text evidence="7">Mice immunized against the protein produce specific antibodies, show predominant Th1-type immune profile in response to vaccination and survive longer after Toxoplasma challenge.</text>
</comment>
<comment type="similarity">
    <text evidence="17">Belongs to the Gra7 family.</text>
</comment>
<sequence>MARHAIFSALCVLGLVAAALPQFATAATASDDELMSRIRNSDFFDGQAPVDSLRPTNAGVDSKGTDDHLTTSMDKASVESQLPRREPLETEPDEQEEVHFRKRGVRSDAEVTDDNIYEEHTDRKVVPRKSEGKRSFKDLLKKLALPAVGMGASYFAADRLVPELTEEQQRGDEPLTTGQNVGTVLGFAALAAAAAFLGMGLTRTYRHFSPRKNRSRQPALEQEVPESGEDGEDARQ</sequence>
<keyword id="KW-0963">Cytoplasm</keyword>
<keyword id="KW-0968">Cytoplasmic vesicle</keyword>
<keyword id="KW-0903">Direct protein sequencing</keyword>
<keyword id="KW-0325">Glycoprotein</keyword>
<keyword id="KW-1035">Host cytoplasm</keyword>
<keyword id="KW-0472">Membrane</keyword>
<keyword id="KW-0964">Secreted</keyword>
<keyword id="KW-0732">Signal</keyword>
<keyword id="KW-0812">Transmembrane</keyword>
<keyword id="KW-1133">Transmembrane helix</keyword>